<protein>
    <recommendedName>
        <fullName>Probable C4-dicarboxylate sensor kinase</fullName>
        <ecNumber>2.7.13.3</ecNumber>
    </recommendedName>
</protein>
<organism>
    <name type="scientific">Halalkalibacterium halodurans (strain ATCC BAA-125 / DSM 18197 / FERM 7344 / JCM 9153 / C-125)</name>
    <name type="common">Bacillus halodurans</name>
    <dbReference type="NCBI Taxonomy" id="272558"/>
    <lineage>
        <taxon>Bacteria</taxon>
        <taxon>Bacillati</taxon>
        <taxon>Bacillota</taxon>
        <taxon>Bacilli</taxon>
        <taxon>Bacillales</taxon>
        <taxon>Bacillaceae</taxon>
        <taxon>Halalkalibacterium (ex Joshi et al. 2022)</taxon>
    </lineage>
</organism>
<accession>Q9K997</accession>
<sequence length="532" mass="59999">MRLFRQLSIQWKITILSFGIVAFALMMVSISLLGYVTSIKEDELSNRTMITAQLVAQNHTVQQWVDAKPEEASRTLQPIVERIRVINDHDYIVLLNMDRIRITHPIPERLQTPFVGGDEDPAFAEHIYLSKAKTEGVVTVRAFMPILNQQREQVGVAVVGSVLPSYADMIQEFWQPALLIGLITALFGFWGSWLLASHIKRQTFNMEPDELAHLLVERDASFNAIHEGVVAINKHEKITIMNEAARRMLGVKEKAIGRNIHEVIPDTKLPEILSIGKPLYQREFYIQGRLVFSNRIPIQIDGETVGAIAIFQDKSDVDRLAEELTGVQAFVDALRVQNHEYSNKLHTIAGLIQLDEGKKALQYIFDLEEEQEEFSGVVMQKIHNDSLAGLLLGKVSRGKELGVQVIIEKDSEFIDHPEGVTTHDLVVIVGNLIDNSLDAFSSTQDQNKTVHVFIGEENDFLKIRVRDNGEGIREEVREKMFVRGFSTKSTSGRGIGLFLIQAIVERVEGKIEVESELNIGTTFSIYLPKKRG</sequence>
<proteinExistence type="inferred from homology"/>
<evidence type="ECO:0000250" key="1"/>
<evidence type="ECO:0000255" key="2"/>
<evidence type="ECO:0000255" key="3">
    <source>
        <dbReference type="PROSITE-ProRule" id="PRU00107"/>
    </source>
</evidence>
<evidence type="ECO:0000305" key="4"/>
<gene>
    <name type="primary">dctS</name>
    <name type="ordered locus">BH2752</name>
</gene>
<name>DCTS_HALH5</name>
<keyword id="KW-0067">ATP-binding</keyword>
<keyword id="KW-1003">Cell membrane</keyword>
<keyword id="KW-0418">Kinase</keyword>
<keyword id="KW-0472">Membrane</keyword>
<keyword id="KW-0547">Nucleotide-binding</keyword>
<keyword id="KW-0597">Phosphoprotein</keyword>
<keyword id="KW-1185">Reference proteome</keyword>
<keyword id="KW-0808">Transferase</keyword>
<keyword id="KW-0812">Transmembrane</keyword>
<keyword id="KW-1133">Transmembrane helix</keyword>
<keyword id="KW-0902">Two-component regulatory system</keyword>
<reference key="1">
    <citation type="journal article" date="2000" name="Nucleic Acids Res.">
        <title>Complete genome sequence of the alkaliphilic bacterium Bacillus halodurans and genomic sequence comparison with Bacillus subtilis.</title>
        <authorList>
            <person name="Takami H."/>
            <person name="Nakasone K."/>
            <person name="Takaki Y."/>
            <person name="Maeno G."/>
            <person name="Sasaki R."/>
            <person name="Masui N."/>
            <person name="Fuji F."/>
            <person name="Hirama C."/>
            <person name="Nakamura Y."/>
            <person name="Ogasawara N."/>
            <person name="Kuhara S."/>
            <person name="Horikoshi K."/>
        </authorList>
    </citation>
    <scope>NUCLEOTIDE SEQUENCE [LARGE SCALE GENOMIC DNA]</scope>
    <source>
        <strain>ATCC BAA-125 / DSM 18197 / FERM 7344 / JCM 9153 / C-125</strain>
    </source>
</reference>
<comment type="function">
    <text evidence="1">Member of the two-component regulatory system DctS/DctR. Probably activates DctR by phosphorylation. Essential for expression of dctP (By similarity).</text>
</comment>
<comment type="catalytic activity">
    <reaction>
        <text>ATP + protein L-histidine = ADP + protein N-phospho-L-histidine.</text>
        <dbReference type="EC" id="2.7.13.3"/>
    </reaction>
</comment>
<comment type="subcellular location">
    <subcellularLocation>
        <location evidence="4">Cell membrane</location>
        <topology evidence="4">Multi-pass membrane protein</topology>
    </subcellularLocation>
</comment>
<feature type="chain" id="PRO_0000074727" description="Probable C4-dicarboxylate sensor kinase">
    <location>
        <begin position="1"/>
        <end position="532"/>
    </location>
</feature>
<feature type="topological domain" description="Cytoplasmic" evidence="2">
    <location>
        <begin position="1"/>
        <end position="12"/>
    </location>
</feature>
<feature type="transmembrane region" description="Helical" evidence="2">
    <location>
        <begin position="13"/>
        <end position="33"/>
    </location>
</feature>
<feature type="topological domain" description="Extracellular" evidence="2">
    <location>
        <begin position="34"/>
        <end position="175"/>
    </location>
</feature>
<feature type="transmembrane region" description="Helical" evidence="2">
    <location>
        <begin position="176"/>
        <end position="196"/>
    </location>
</feature>
<feature type="topological domain" description="Cytoplasmic" evidence="2">
    <location>
        <begin position="197"/>
        <end position="532"/>
    </location>
</feature>
<feature type="domain" description="PAS">
    <location>
        <begin position="216"/>
        <end position="279"/>
    </location>
</feature>
<feature type="domain" description="Histidine kinase" evidence="3">
    <location>
        <begin position="315"/>
        <end position="531"/>
    </location>
</feature>
<feature type="modified residue" description="Phosphohistidine; by autocatalysis" evidence="3">
    <location>
        <position position="339"/>
    </location>
</feature>
<dbReference type="EC" id="2.7.13.3"/>
<dbReference type="EMBL" id="BA000004">
    <property type="protein sequence ID" value="BAB06471.1"/>
    <property type="molecule type" value="Genomic_DNA"/>
</dbReference>
<dbReference type="PIR" id="H83993">
    <property type="entry name" value="H83993"/>
</dbReference>
<dbReference type="RefSeq" id="WP_010898900.1">
    <property type="nucleotide sequence ID" value="NC_002570.2"/>
</dbReference>
<dbReference type="SMR" id="Q9K997"/>
<dbReference type="STRING" id="272558.gene:10728651"/>
<dbReference type="DNASU" id="893487"/>
<dbReference type="KEGG" id="bha:BH2752"/>
<dbReference type="eggNOG" id="COG3290">
    <property type="taxonomic scope" value="Bacteria"/>
</dbReference>
<dbReference type="HOGENOM" id="CLU_020211_11_2_9"/>
<dbReference type="OrthoDB" id="9792686at2"/>
<dbReference type="Proteomes" id="UP000001258">
    <property type="component" value="Chromosome"/>
</dbReference>
<dbReference type="GO" id="GO:0005886">
    <property type="term" value="C:plasma membrane"/>
    <property type="evidence" value="ECO:0007669"/>
    <property type="project" value="UniProtKB-SubCell"/>
</dbReference>
<dbReference type="GO" id="GO:0005524">
    <property type="term" value="F:ATP binding"/>
    <property type="evidence" value="ECO:0007669"/>
    <property type="project" value="UniProtKB-KW"/>
</dbReference>
<dbReference type="GO" id="GO:0000155">
    <property type="term" value="F:phosphorelay sensor kinase activity"/>
    <property type="evidence" value="ECO:0007669"/>
    <property type="project" value="InterPro"/>
</dbReference>
<dbReference type="GO" id="GO:0006355">
    <property type="term" value="P:regulation of DNA-templated transcription"/>
    <property type="evidence" value="ECO:0007669"/>
    <property type="project" value="InterPro"/>
</dbReference>
<dbReference type="CDD" id="cd16915">
    <property type="entry name" value="HATPase_DpiB-CitA-like"/>
    <property type="match status" value="1"/>
</dbReference>
<dbReference type="CDD" id="cd00130">
    <property type="entry name" value="PAS"/>
    <property type="match status" value="1"/>
</dbReference>
<dbReference type="Gene3D" id="1.10.287.130">
    <property type="match status" value="1"/>
</dbReference>
<dbReference type="Gene3D" id="3.30.565.10">
    <property type="entry name" value="Histidine kinase-like ATPase, C-terminal domain"/>
    <property type="match status" value="1"/>
</dbReference>
<dbReference type="Gene3D" id="3.30.450.20">
    <property type="entry name" value="PAS domain"/>
    <property type="match status" value="2"/>
</dbReference>
<dbReference type="InterPro" id="IPR036890">
    <property type="entry name" value="HATPase_C_sf"/>
</dbReference>
<dbReference type="InterPro" id="IPR005467">
    <property type="entry name" value="His_kinase_dom"/>
</dbReference>
<dbReference type="InterPro" id="IPR000014">
    <property type="entry name" value="PAS"/>
</dbReference>
<dbReference type="InterPro" id="IPR035965">
    <property type="entry name" value="PAS-like_dom_sf"/>
</dbReference>
<dbReference type="InterPro" id="IPR013767">
    <property type="entry name" value="PAS_fold"/>
</dbReference>
<dbReference type="InterPro" id="IPR033463">
    <property type="entry name" value="sCache_3"/>
</dbReference>
<dbReference type="InterPro" id="IPR029151">
    <property type="entry name" value="Sensor-like_sf"/>
</dbReference>
<dbReference type="InterPro" id="IPR004358">
    <property type="entry name" value="Sig_transdc_His_kin-like_C"/>
</dbReference>
<dbReference type="InterPro" id="IPR016120">
    <property type="entry name" value="Sig_transdc_His_kin_SpoOB"/>
</dbReference>
<dbReference type="InterPro" id="IPR039506">
    <property type="entry name" value="SPOB_a"/>
</dbReference>
<dbReference type="PANTHER" id="PTHR43547:SF10">
    <property type="entry name" value="SENSOR HISTIDINE KINASE DCUS"/>
    <property type="match status" value="1"/>
</dbReference>
<dbReference type="PANTHER" id="PTHR43547">
    <property type="entry name" value="TWO-COMPONENT HISTIDINE KINASE"/>
    <property type="match status" value="1"/>
</dbReference>
<dbReference type="Pfam" id="PF02518">
    <property type="entry name" value="HATPase_c"/>
    <property type="match status" value="1"/>
</dbReference>
<dbReference type="Pfam" id="PF00989">
    <property type="entry name" value="PAS"/>
    <property type="match status" value="1"/>
</dbReference>
<dbReference type="Pfam" id="PF17203">
    <property type="entry name" value="sCache_3_2"/>
    <property type="match status" value="1"/>
</dbReference>
<dbReference type="Pfam" id="PF14689">
    <property type="entry name" value="SPOB_a"/>
    <property type="match status" value="1"/>
</dbReference>
<dbReference type="PRINTS" id="PR00344">
    <property type="entry name" value="BCTRLSENSOR"/>
</dbReference>
<dbReference type="SMART" id="SM00387">
    <property type="entry name" value="HATPase_c"/>
    <property type="match status" value="1"/>
</dbReference>
<dbReference type="SMART" id="SM00091">
    <property type="entry name" value="PAS"/>
    <property type="match status" value="1"/>
</dbReference>
<dbReference type="SUPFAM" id="SSF55874">
    <property type="entry name" value="ATPase domain of HSP90 chaperone/DNA topoisomerase II/histidine kinase"/>
    <property type="match status" value="1"/>
</dbReference>
<dbReference type="SUPFAM" id="SSF55785">
    <property type="entry name" value="PYP-like sensor domain (PAS domain)"/>
    <property type="match status" value="1"/>
</dbReference>
<dbReference type="SUPFAM" id="SSF103190">
    <property type="entry name" value="Sensory domain-like"/>
    <property type="match status" value="1"/>
</dbReference>
<dbReference type="SUPFAM" id="SSF55890">
    <property type="entry name" value="Sporulation response regulatory protein Spo0B"/>
    <property type="match status" value="1"/>
</dbReference>
<dbReference type="PROSITE" id="PS50109">
    <property type="entry name" value="HIS_KIN"/>
    <property type="match status" value="1"/>
</dbReference>